<name>IF2_CHLP8</name>
<reference key="1">
    <citation type="submission" date="2008-06" db="EMBL/GenBank/DDBJ databases">
        <title>Complete sequence of Chlorobaculum parvum NCIB 8327.</title>
        <authorList>
            <consortium name="US DOE Joint Genome Institute"/>
            <person name="Lucas S."/>
            <person name="Copeland A."/>
            <person name="Lapidus A."/>
            <person name="Glavina del Rio T."/>
            <person name="Dalin E."/>
            <person name="Tice H."/>
            <person name="Bruce D."/>
            <person name="Goodwin L."/>
            <person name="Pitluck S."/>
            <person name="Schmutz J."/>
            <person name="Larimer F."/>
            <person name="Land M."/>
            <person name="Hauser L."/>
            <person name="Kyrpides N."/>
            <person name="Mikhailova N."/>
            <person name="Zhao F."/>
            <person name="Li T."/>
            <person name="Liu Z."/>
            <person name="Overmann J."/>
            <person name="Bryant D.A."/>
            <person name="Richardson P."/>
        </authorList>
    </citation>
    <scope>NUCLEOTIDE SEQUENCE [LARGE SCALE GENOMIC DNA]</scope>
    <source>
        <strain>DSM 263 / NCIMB 8327</strain>
    </source>
</reference>
<protein>
    <recommendedName>
        <fullName evidence="2">Translation initiation factor IF-2</fullName>
    </recommendedName>
</protein>
<keyword id="KW-0963">Cytoplasm</keyword>
<keyword id="KW-0342">GTP-binding</keyword>
<keyword id="KW-0396">Initiation factor</keyword>
<keyword id="KW-0547">Nucleotide-binding</keyword>
<keyword id="KW-0648">Protein biosynthesis</keyword>
<sequence length="939" mass="103258">MAIEEKQSRFRISDIARELQVSPREVLQFVKQEGGKVASTSSMVGEEMRDMIFGNFSQEKKLVDETRKIRAEKKKRLTRLEEQSRKAYEKEQQLKESLSSAPSPAPAAHTPEPVKEPFVEIPARHEPAVSPAAPAEQPVIAETPQPESPKEEVVATKAPEAEAKPVEQPEKAAETAVEAQPEAQSQQEPGAEESAEASQTLVQTLPDSMKTYEAPQKIGGLTVLGTIDVSSGSDRKKKSRKKSFKENAAELKDEFEGATSGSSEGGEAGRKKVAKAAGEGESTTGGEDASGKKKKGKKKKKVEVDDKVISKNIKSTISGMDDSGSSGSRQKFRKMRRMERERELEEAEAMREAEKSLIKVTEYASPHELAELMGLTAKDIIQKCFTLGKFVTINQRLDKETIELIAMEFGFDIEFTTEVEATTTEEQVDNPEDMKTRPPVVTIMGHVDHGKTSLLDYIRRSNVVAGESGGITQHIGAYEVTVEGDRQITFLDTPGHEAFTAMRARGAQVTDIVILVVAADDSVMPQTIEAINHSKAAGVPIVVALNKIDKPEANVDKIKTQLSEAGVLVEDWGGEYQCQEISAKKGIGISELMEKVLTEAEVRELKGNYSRDIMASGIIVESELDKGKGVVSTVLVQRGFLKVGDPFVAGNSMGKVRALMDERGKRTDEAGPSTPVRVLGFEDMPQSGDVLTVMESDRDARDLAQKRQIIKREHEFRRSTRVKLDSIARQIKEGLKKELSVIIKADTDGSIQALADGLMKIHNEEVKVQLIHQGVGQITETDVLLAAASDAIIIGFRVRPNVNAKRLAEKEDLDVRFYSVIYHVLEDVEKALEGMLSPELHEESLGSIEIRQVFRVPKVGNVGGAYVLDGKVPRDANVRLLRDGVQIYEGQLDSLKRFKDDVKEVDSGYECGLSLKGYDDIKVGDVVEAYKIVEKKRKL</sequence>
<feature type="chain" id="PRO_1000093768" description="Translation initiation factor IF-2">
    <location>
        <begin position="1"/>
        <end position="939"/>
    </location>
</feature>
<feature type="domain" description="tr-type G">
    <location>
        <begin position="436"/>
        <end position="606"/>
    </location>
</feature>
<feature type="region of interest" description="Disordered" evidence="3">
    <location>
        <begin position="81"/>
        <end position="303"/>
    </location>
</feature>
<feature type="region of interest" description="Disordered" evidence="3">
    <location>
        <begin position="316"/>
        <end position="337"/>
    </location>
</feature>
<feature type="region of interest" description="G1" evidence="1">
    <location>
        <begin position="445"/>
        <end position="452"/>
    </location>
</feature>
<feature type="region of interest" description="G2" evidence="1">
    <location>
        <begin position="470"/>
        <end position="474"/>
    </location>
</feature>
<feature type="region of interest" description="G3" evidence="1">
    <location>
        <begin position="492"/>
        <end position="495"/>
    </location>
</feature>
<feature type="region of interest" description="G4" evidence="1">
    <location>
        <begin position="546"/>
        <end position="549"/>
    </location>
</feature>
<feature type="region of interest" description="G5" evidence="1">
    <location>
        <begin position="582"/>
        <end position="584"/>
    </location>
</feature>
<feature type="compositionally biased region" description="Basic and acidic residues" evidence="3">
    <location>
        <begin position="81"/>
        <end position="94"/>
    </location>
</feature>
<feature type="compositionally biased region" description="Low complexity" evidence="3">
    <location>
        <begin position="99"/>
        <end position="108"/>
    </location>
</feature>
<feature type="compositionally biased region" description="Basic and acidic residues" evidence="3">
    <location>
        <begin position="112"/>
        <end position="127"/>
    </location>
</feature>
<feature type="compositionally biased region" description="Basic and acidic residues" evidence="3">
    <location>
        <begin position="148"/>
        <end position="173"/>
    </location>
</feature>
<feature type="compositionally biased region" description="Low complexity" evidence="3">
    <location>
        <begin position="178"/>
        <end position="189"/>
    </location>
</feature>
<feature type="compositionally biased region" description="Basic and acidic residues" evidence="3">
    <location>
        <begin position="244"/>
        <end position="255"/>
    </location>
</feature>
<feature type="compositionally biased region" description="Low complexity" evidence="3">
    <location>
        <begin position="276"/>
        <end position="287"/>
    </location>
</feature>
<feature type="compositionally biased region" description="Basic residues" evidence="3">
    <location>
        <begin position="292"/>
        <end position="301"/>
    </location>
</feature>
<feature type="compositionally biased region" description="Low complexity" evidence="3">
    <location>
        <begin position="318"/>
        <end position="328"/>
    </location>
</feature>
<feature type="binding site" evidence="2">
    <location>
        <begin position="445"/>
        <end position="452"/>
    </location>
    <ligand>
        <name>GTP</name>
        <dbReference type="ChEBI" id="CHEBI:37565"/>
    </ligand>
</feature>
<feature type="binding site" evidence="2">
    <location>
        <begin position="492"/>
        <end position="496"/>
    </location>
    <ligand>
        <name>GTP</name>
        <dbReference type="ChEBI" id="CHEBI:37565"/>
    </ligand>
</feature>
<feature type="binding site" evidence="2">
    <location>
        <begin position="546"/>
        <end position="549"/>
    </location>
    <ligand>
        <name>GTP</name>
        <dbReference type="ChEBI" id="CHEBI:37565"/>
    </ligand>
</feature>
<organism>
    <name type="scientific">Chlorobaculum parvum (strain DSM 263 / NCIMB 8327)</name>
    <name type="common">Chlorobium vibrioforme subsp. thiosulfatophilum</name>
    <dbReference type="NCBI Taxonomy" id="517417"/>
    <lineage>
        <taxon>Bacteria</taxon>
        <taxon>Pseudomonadati</taxon>
        <taxon>Chlorobiota</taxon>
        <taxon>Chlorobiia</taxon>
        <taxon>Chlorobiales</taxon>
        <taxon>Chlorobiaceae</taxon>
        <taxon>Chlorobaculum</taxon>
    </lineage>
</organism>
<dbReference type="EMBL" id="CP001099">
    <property type="protein sequence ID" value="ACF12185.1"/>
    <property type="molecule type" value="Genomic_DNA"/>
</dbReference>
<dbReference type="RefSeq" id="WP_012503018.1">
    <property type="nucleotide sequence ID" value="NC_011027.1"/>
</dbReference>
<dbReference type="SMR" id="B3QQI2"/>
<dbReference type="STRING" id="517417.Cpar_1793"/>
<dbReference type="KEGG" id="cpc:Cpar_1793"/>
<dbReference type="eggNOG" id="COG0532">
    <property type="taxonomic scope" value="Bacteria"/>
</dbReference>
<dbReference type="eggNOG" id="COG3170">
    <property type="taxonomic scope" value="Bacteria"/>
</dbReference>
<dbReference type="HOGENOM" id="CLU_006301_0_1_10"/>
<dbReference type="OrthoDB" id="9811804at2"/>
<dbReference type="Proteomes" id="UP000008811">
    <property type="component" value="Chromosome"/>
</dbReference>
<dbReference type="GO" id="GO:0005737">
    <property type="term" value="C:cytoplasm"/>
    <property type="evidence" value="ECO:0007669"/>
    <property type="project" value="UniProtKB-SubCell"/>
</dbReference>
<dbReference type="GO" id="GO:0005525">
    <property type="term" value="F:GTP binding"/>
    <property type="evidence" value="ECO:0007669"/>
    <property type="project" value="UniProtKB-KW"/>
</dbReference>
<dbReference type="GO" id="GO:0003924">
    <property type="term" value="F:GTPase activity"/>
    <property type="evidence" value="ECO:0007669"/>
    <property type="project" value="UniProtKB-UniRule"/>
</dbReference>
<dbReference type="GO" id="GO:0003743">
    <property type="term" value="F:translation initiation factor activity"/>
    <property type="evidence" value="ECO:0007669"/>
    <property type="project" value="UniProtKB-UniRule"/>
</dbReference>
<dbReference type="CDD" id="cd01887">
    <property type="entry name" value="IF2_eIF5B"/>
    <property type="match status" value="1"/>
</dbReference>
<dbReference type="CDD" id="cd03702">
    <property type="entry name" value="IF2_mtIF2_II"/>
    <property type="match status" value="1"/>
</dbReference>
<dbReference type="CDD" id="cd03692">
    <property type="entry name" value="mtIF2_IVc"/>
    <property type="match status" value="1"/>
</dbReference>
<dbReference type="FunFam" id="2.40.30.10:FF:000007">
    <property type="entry name" value="Translation initiation factor IF-2"/>
    <property type="match status" value="1"/>
</dbReference>
<dbReference type="FunFam" id="2.40.30.10:FF:000008">
    <property type="entry name" value="Translation initiation factor IF-2"/>
    <property type="match status" value="1"/>
</dbReference>
<dbReference type="FunFam" id="3.40.50.10050:FF:000001">
    <property type="entry name" value="Translation initiation factor IF-2"/>
    <property type="match status" value="1"/>
</dbReference>
<dbReference type="FunFam" id="3.40.50.300:FF:000019">
    <property type="entry name" value="Translation initiation factor IF-2"/>
    <property type="match status" value="1"/>
</dbReference>
<dbReference type="Gene3D" id="1.10.10.2480">
    <property type="match status" value="1"/>
</dbReference>
<dbReference type="Gene3D" id="3.40.50.300">
    <property type="entry name" value="P-loop containing nucleotide triphosphate hydrolases"/>
    <property type="match status" value="1"/>
</dbReference>
<dbReference type="Gene3D" id="2.40.30.10">
    <property type="entry name" value="Translation factors"/>
    <property type="match status" value="2"/>
</dbReference>
<dbReference type="Gene3D" id="3.40.50.10050">
    <property type="entry name" value="Translation initiation factor IF- 2, domain 3"/>
    <property type="match status" value="1"/>
</dbReference>
<dbReference type="HAMAP" id="MF_00100_B">
    <property type="entry name" value="IF_2_B"/>
    <property type="match status" value="1"/>
</dbReference>
<dbReference type="InterPro" id="IPR053905">
    <property type="entry name" value="EF-G-like_DII"/>
</dbReference>
<dbReference type="InterPro" id="IPR044145">
    <property type="entry name" value="IF2_II"/>
</dbReference>
<dbReference type="InterPro" id="IPR006847">
    <property type="entry name" value="IF2_N"/>
</dbReference>
<dbReference type="InterPro" id="IPR027417">
    <property type="entry name" value="P-loop_NTPase"/>
</dbReference>
<dbReference type="InterPro" id="IPR005225">
    <property type="entry name" value="Small_GTP-bd"/>
</dbReference>
<dbReference type="InterPro" id="IPR000795">
    <property type="entry name" value="T_Tr_GTP-bd_dom"/>
</dbReference>
<dbReference type="InterPro" id="IPR000178">
    <property type="entry name" value="TF_IF2_bacterial-like"/>
</dbReference>
<dbReference type="InterPro" id="IPR015760">
    <property type="entry name" value="TIF_IF2"/>
</dbReference>
<dbReference type="InterPro" id="IPR023115">
    <property type="entry name" value="TIF_IF2_dom3"/>
</dbReference>
<dbReference type="InterPro" id="IPR036925">
    <property type="entry name" value="TIF_IF2_dom3_sf"/>
</dbReference>
<dbReference type="InterPro" id="IPR009000">
    <property type="entry name" value="Transl_B-barrel_sf"/>
</dbReference>
<dbReference type="NCBIfam" id="TIGR00487">
    <property type="entry name" value="IF-2"/>
    <property type="match status" value="1"/>
</dbReference>
<dbReference type="NCBIfam" id="TIGR00231">
    <property type="entry name" value="small_GTP"/>
    <property type="match status" value="1"/>
</dbReference>
<dbReference type="PANTHER" id="PTHR43381:SF5">
    <property type="entry name" value="TR-TYPE G DOMAIN-CONTAINING PROTEIN"/>
    <property type="match status" value="1"/>
</dbReference>
<dbReference type="PANTHER" id="PTHR43381">
    <property type="entry name" value="TRANSLATION INITIATION FACTOR IF-2-RELATED"/>
    <property type="match status" value="1"/>
</dbReference>
<dbReference type="Pfam" id="PF22042">
    <property type="entry name" value="EF-G_D2"/>
    <property type="match status" value="1"/>
</dbReference>
<dbReference type="Pfam" id="PF00009">
    <property type="entry name" value="GTP_EFTU"/>
    <property type="match status" value="1"/>
</dbReference>
<dbReference type="Pfam" id="PF11987">
    <property type="entry name" value="IF-2"/>
    <property type="match status" value="1"/>
</dbReference>
<dbReference type="Pfam" id="PF04760">
    <property type="entry name" value="IF2_N"/>
    <property type="match status" value="1"/>
</dbReference>
<dbReference type="SUPFAM" id="SSF52156">
    <property type="entry name" value="Initiation factor IF2/eIF5b, domain 3"/>
    <property type="match status" value="1"/>
</dbReference>
<dbReference type="SUPFAM" id="SSF52540">
    <property type="entry name" value="P-loop containing nucleoside triphosphate hydrolases"/>
    <property type="match status" value="1"/>
</dbReference>
<dbReference type="SUPFAM" id="SSF50447">
    <property type="entry name" value="Translation proteins"/>
    <property type="match status" value="2"/>
</dbReference>
<dbReference type="PROSITE" id="PS51722">
    <property type="entry name" value="G_TR_2"/>
    <property type="match status" value="1"/>
</dbReference>
<dbReference type="PROSITE" id="PS01176">
    <property type="entry name" value="IF2"/>
    <property type="match status" value="1"/>
</dbReference>
<accession>B3QQI2</accession>
<proteinExistence type="inferred from homology"/>
<gene>
    <name evidence="2" type="primary">infB</name>
    <name type="ordered locus">Cpar_1793</name>
</gene>
<evidence type="ECO:0000250" key="1"/>
<evidence type="ECO:0000255" key="2">
    <source>
        <dbReference type="HAMAP-Rule" id="MF_00100"/>
    </source>
</evidence>
<evidence type="ECO:0000256" key="3">
    <source>
        <dbReference type="SAM" id="MobiDB-lite"/>
    </source>
</evidence>
<comment type="function">
    <text evidence="2">One of the essential components for the initiation of protein synthesis. Protects formylmethionyl-tRNA from spontaneous hydrolysis and promotes its binding to the 30S ribosomal subunits. Also involved in the hydrolysis of GTP during the formation of the 70S ribosomal complex.</text>
</comment>
<comment type="subcellular location">
    <subcellularLocation>
        <location evidence="2">Cytoplasm</location>
    </subcellularLocation>
</comment>
<comment type="similarity">
    <text evidence="2">Belongs to the TRAFAC class translation factor GTPase superfamily. Classic translation factor GTPase family. IF-2 subfamily.</text>
</comment>